<sequence>MAGPGPTFPLHRLVWANRHRELEAALHSHQHDIEQEDPRGRTPLELAVSLGNLESVRVLLRHNANVGKENRQGWAVLQEAVSTGDPEMVQLVLQYRDYQRATQRLAGIPELLNKLRQAPDFYVEMKWEFTSWVPLVSKMCPSDVYRVWKRGESLRVDTSLLGFEHMTWQRGRRSFIFKGQEAGALVMEVDHDRQVVHVETLGLTLQEPETLLAAMRPSEEHVASRLTSPIVSTHLDTRNVAFERNKCGIWGWRSEKMETVSGYEAKVYSATNVELVTRTRTEHLSDQDKSRSKAGKTPFQSFLGMAQQHSSHTGAPVQQAASPTNPTAISPEEYFDPNFSLESRNIGRPIEMSSKVQRFKATLWLSEEHPLSLGDQVTPIIDLMAISNAHFAKLRDFITLRLPPGFPVKIEIPLFHVLNARITFSNLCGCDEPLSSVWVPAPSSAVAASGNPFPCEVDPTVFEVPNGYSVLGMERNEPLRDEDDDLLQFAIQQSLLEAGTEAEQVTVWEALTNTRPGARPPPQATVYEEQLQLERALQESLQLSTEPRGPGSPPRTPPAPGPPSFEEQLRLALELSSREQEERERRGQQEEEDLQRILQLSLTEH</sequence>
<evidence type="ECO:0000255" key="1"/>
<evidence type="ECO:0000255" key="2">
    <source>
        <dbReference type="PROSITE-ProRule" id="PRU00213"/>
    </source>
</evidence>
<evidence type="ECO:0000256" key="3">
    <source>
        <dbReference type="SAM" id="MobiDB-lite"/>
    </source>
</evidence>
<evidence type="ECO:0000269" key="4">
    <source>
    </source>
</evidence>
<evidence type="ECO:0000303" key="5">
    <source>
    </source>
</evidence>
<evidence type="ECO:0000303" key="6">
    <source>
    </source>
</evidence>
<evidence type="ECO:0000305" key="7"/>
<evidence type="ECO:0007744" key="8">
    <source>
    </source>
</evidence>
<evidence type="ECO:0007744" key="9">
    <source>
    </source>
</evidence>
<evidence type="ECO:0007744" key="10">
    <source>
    </source>
</evidence>
<evidence type="ECO:0007829" key="11">
    <source>
        <dbReference type="PDB" id="7RMA"/>
    </source>
</evidence>
<dbReference type="EMBL" id="AK124721">
    <property type="protein sequence ID" value="BAC85932.1"/>
    <property type="molecule type" value="mRNA"/>
</dbReference>
<dbReference type="EMBL" id="AK126438">
    <property type="protein sequence ID" value="BAC86550.1"/>
    <property type="molecule type" value="mRNA"/>
</dbReference>
<dbReference type="EMBL" id="AP001885">
    <property type="status" value="NOT_ANNOTATED_CDS"/>
    <property type="molecule type" value="Genomic_DNA"/>
</dbReference>
<dbReference type="EMBL" id="BC044239">
    <property type="protein sequence ID" value="AAH44239.1"/>
    <property type="molecule type" value="mRNA"/>
</dbReference>
<dbReference type="EMBL" id="BC110419">
    <property type="protein sequence ID" value="AAI10420.1"/>
    <property type="molecule type" value="mRNA"/>
</dbReference>
<dbReference type="EMBL" id="BC121024">
    <property type="protein sequence ID" value="AAI21025.1"/>
    <property type="molecule type" value="mRNA"/>
</dbReference>
<dbReference type="EMBL" id="BC121025">
    <property type="protein sequence ID" value="AAI21026.1"/>
    <property type="molecule type" value="mRNA"/>
</dbReference>
<dbReference type="CCDS" id="CCDS31616.2">
    <molecule id="Q6ZTN6-3"/>
</dbReference>
<dbReference type="RefSeq" id="NP_001334830.1">
    <molecule id="Q6ZTN6-1"/>
    <property type="nucleotide sequence ID" value="NM_001347901.2"/>
</dbReference>
<dbReference type="RefSeq" id="NP_997237.2">
    <molecule id="Q6ZTN6-3"/>
    <property type="nucleotide sequence ID" value="NM_207354.3"/>
</dbReference>
<dbReference type="RefSeq" id="XP_047282828.1">
    <molecule id="Q6ZTN6-1"/>
    <property type="nucleotide sequence ID" value="XM_047426872.1"/>
</dbReference>
<dbReference type="RefSeq" id="XP_047282829.1">
    <molecule id="Q6ZTN6-1"/>
    <property type="nucleotide sequence ID" value="XM_047426873.1"/>
</dbReference>
<dbReference type="RefSeq" id="XP_047282830.1">
    <molecule id="Q6ZTN6-1"/>
    <property type="nucleotide sequence ID" value="XM_047426874.1"/>
</dbReference>
<dbReference type="RefSeq" id="XP_054224603.1">
    <molecule id="Q6ZTN6-1"/>
    <property type="nucleotide sequence ID" value="XM_054368628.1"/>
</dbReference>
<dbReference type="RefSeq" id="XP_054224604.1">
    <molecule id="Q6ZTN6-1"/>
    <property type="nucleotide sequence ID" value="XM_054368629.1"/>
</dbReference>
<dbReference type="RefSeq" id="XP_054224605.1">
    <molecule id="Q6ZTN6-1"/>
    <property type="nucleotide sequence ID" value="XM_054368630.1"/>
</dbReference>
<dbReference type="PDB" id="7RMA">
    <property type="method" value="X-ray"/>
    <property type="resolution" value="2.00 A"/>
    <property type="chains" value="C=586-605"/>
</dbReference>
<dbReference type="PDBsum" id="7RMA"/>
<dbReference type="SMR" id="Q6ZTN6"/>
<dbReference type="BioGRID" id="130781">
    <property type="interactions" value="60"/>
</dbReference>
<dbReference type="FunCoup" id="Q6ZTN6">
    <property type="interactions" value="1834"/>
</dbReference>
<dbReference type="IntAct" id="Q6ZTN6">
    <property type="interactions" value="66"/>
</dbReference>
<dbReference type="STRING" id="9606.ENSP00000427130"/>
<dbReference type="iPTMnet" id="Q6ZTN6"/>
<dbReference type="PhosphoSitePlus" id="Q6ZTN6"/>
<dbReference type="BioMuta" id="ANKRD13D"/>
<dbReference type="DMDM" id="109940208"/>
<dbReference type="jPOST" id="Q6ZTN6"/>
<dbReference type="MassIVE" id="Q6ZTN6"/>
<dbReference type="PaxDb" id="9606-ENSP00000427130"/>
<dbReference type="PeptideAtlas" id="Q6ZTN6"/>
<dbReference type="ProteomicsDB" id="68279">
    <molecule id="Q6ZTN6-1"/>
</dbReference>
<dbReference type="ProteomicsDB" id="68280">
    <molecule id="Q6ZTN6-2"/>
</dbReference>
<dbReference type="ProteomicsDB" id="68281">
    <molecule id="Q6ZTN6-3"/>
</dbReference>
<dbReference type="Antibodypedia" id="44541">
    <property type="antibodies" value="51 antibodies from 16 providers"/>
</dbReference>
<dbReference type="DNASU" id="338692"/>
<dbReference type="Ensembl" id="ENST00000511455.7">
    <molecule id="Q6ZTN6-3"/>
    <property type="protein sequence ID" value="ENSP00000427130.2"/>
    <property type="gene ID" value="ENSG00000172932.16"/>
</dbReference>
<dbReference type="GeneID" id="338692"/>
<dbReference type="KEGG" id="hsa:338692"/>
<dbReference type="MANE-Select" id="ENST00000511455.7">
    <property type="protein sequence ID" value="ENSP00000427130.2"/>
    <property type="RefSeq nucleotide sequence ID" value="NM_207354.3"/>
    <property type="RefSeq protein sequence ID" value="NP_997237.2"/>
</dbReference>
<dbReference type="UCSC" id="uc001okc.3">
    <molecule id="Q6ZTN6-3"/>
    <property type="organism name" value="human"/>
</dbReference>
<dbReference type="AGR" id="HGNC:27880"/>
<dbReference type="CTD" id="338692"/>
<dbReference type="GeneCards" id="ANKRD13D"/>
<dbReference type="HGNC" id="HGNC:27880">
    <property type="gene designation" value="ANKRD13D"/>
</dbReference>
<dbReference type="HPA" id="ENSG00000172932">
    <property type="expression patterns" value="Low tissue specificity"/>
</dbReference>
<dbReference type="MIM" id="615126">
    <property type="type" value="gene"/>
</dbReference>
<dbReference type="neXtProt" id="NX_Q6ZTN6"/>
<dbReference type="OpenTargets" id="ENSG00000172932"/>
<dbReference type="PharmGKB" id="PA142672618"/>
<dbReference type="VEuPathDB" id="HostDB:ENSG00000172932"/>
<dbReference type="eggNOG" id="KOG0522">
    <property type="taxonomic scope" value="Eukaryota"/>
</dbReference>
<dbReference type="GeneTree" id="ENSGT00950000182928"/>
<dbReference type="HOGENOM" id="CLU_026137_2_0_1"/>
<dbReference type="InParanoid" id="Q6ZTN6"/>
<dbReference type="OMA" id="TQKFRAN"/>
<dbReference type="OrthoDB" id="1585644at2759"/>
<dbReference type="PAN-GO" id="Q6ZTN6">
    <property type="GO annotations" value="1 GO annotation based on evolutionary models"/>
</dbReference>
<dbReference type="PhylomeDB" id="Q6ZTN6"/>
<dbReference type="TreeFam" id="TF314176"/>
<dbReference type="PathwayCommons" id="Q6ZTN6"/>
<dbReference type="SignaLink" id="Q6ZTN6"/>
<dbReference type="SIGNOR" id="Q6ZTN6"/>
<dbReference type="BioGRID-ORCS" id="338692">
    <property type="hits" value="13 hits in 1122 CRISPR screens"/>
</dbReference>
<dbReference type="ChiTaRS" id="ANKRD13D">
    <property type="organism name" value="human"/>
</dbReference>
<dbReference type="GenomeRNAi" id="338692"/>
<dbReference type="Pharos" id="Q6ZTN6">
    <property type="development level" value="Tdark"/>
</dbReference>
<dbReference type="PRO" id="PR:Q6ZTN6"/>
<dbReference type="Proteomes" id="UP000005640">
    <property type="component" value="Chromosome 11"/>
</dbReference>
<dbReference type="RNAct" id="Q6ZTN6">
    <property type="molecule type" value="protein"/>
</dbReference>
<dbReference type="Bgee" id="ENSG00000172932">
    <property type="expression patterns" value="Expressed in granulocyte and 166 other cell types or tissues"/>
</dbReference>
<dbReference type="ExpressionAtlas" id="Q6ZTN6">
    <property type="expression patterns" value="baseline and differential"/>
</dbReference>
<dbReference type="GO" id="GO:0005737">
    <property type="term" value="C:cytoplasm"/>
    <property type="evidence" value="ECO:0000314"/>
    <property type="project" value="UniProtKB"/>
</dbReference>
<dbReference type="GO" id="GO:0005770">
    <property type="term" value="C:late endosome"/>
    <property type="evidence" value="ECO:0007669"/>
    <property type="project" value="UniProtKB-SubCell"/>
</dbReference>
<dbReference type="GO" id="GO:0048471">
    <property type="term" value="C:perinuclear region of cytoplasm"/>
    <property type="evidence" value="ECO:0000314"/>
    <property type="project" value="UniProtKB"/>
</dbReference>
<dbReference type="GO" id="GO:0005886">
    <property type="term" value="C:plasma membrane"/>
    <property type="evidence" value="ECO:0000314"/>
    <property type="project" value="UniProtKB"/>
</dbReference>
<dbReference type="GO" id="GO:0140036">
    <property type="term" value="F:ubiquitin-modified protein reader activity"/>
    <property type="evidence" value="ECO:0000314"/>
    <property type="project" value="UniProtKB"/>
</dbReference>
<dbReference type="GO" id="GO:0002091">
    <property type="term" value="P:negative regulation of receptor internalization"/>
    <property type="evidence" value="ECO:0000315"/>
    <property type="project" value="UniProtKB"/>
</dbReference>
<dbReference type="FunFam" id="1.25.40.20:FF:000057">
    <property type="entry name" value="Ankyrin repeat domain-containing protein 13B"/>
    <property type="match status" value="1"/>
</dbReference>
<dbReference type="Gene3D" id="1.25.40.20">
    <property type="entry name" value="Ankyrin repeat-containing domain"/>
    <property type="match status" value="1"/>
</dbReference>
<dbReference type="InterPro" id="IPR021832">
    <property type="entry name" value="ANKRD13"/>
</dbReference>
<dbReference type="InterPro" id="IPR055285">
    <property type="entry name" value="ANKRD13_C"/>
</dbReference>
<dbReference type="InterPro" id="IPR002110">
    <property type="entry name" value="Ankyrin_rpt"/>
</dbReference>
<dbReference type="InterPro" id="IPR036770">
    <property type="entry name" value="Ankyrin_rpt-contain_sf"/>
</dbReference>
<dbReference type="InterPro" id="IPR003903">
    <property type="entry name" value="UIM_dom"/>
</dbReference>
<dbReference type="PANTHER" id="PTHR12447">
    <property type="entry name" value="ANKYRIN REPEAT DOMAIN-CONTAINING PROTEIN 13"/>
    <property type="match status" value="1"/>
</dbReference>
<dbReference type="PANTHER" id="PTHR12447:SF2">
    <property type="entry name" value="ANKYRIN REPEAT DOMAIN-CONTAINING PROTEIN 13D"/>
    <property type="match status" value="1"/>
</dbReference>
<dbReference type="Pfam" id="PF12796">
    <property type="entry name" value="Ank_2"/>
    <property type="match status" value="1"/>
</dbReference>
<dbReference type="Pfam" id="PF11904">
    <property type="entry name" value="ANKRD13_C"/>
    <property type="match status" value="1"/>
</dbReference>
<dbReference type="SMART" id="SM00248">
    <property type="entry name" value="ANK"/>
    <property type="match status" value="2"/>
</dbReference>
<dbReference type="SMART" id="SM00726">
    <property type="entry name" value="UIM"/>
    <property type="match status" value="4"/>
</dbReference>
<dbReference type="SUPFAM" id="SSF48403">
    <property type="entry name" value="Ankyrin repeat"/>
    <property type="match status" value="1"/>
</dbReference>
<dbReference type="PROSITE" id="PS50297">
    <property type="entry name" value="ANK_REP_REGION"/>
    <property type="match status" value="1"/>
</dbReference>
<dbReference type="PROSITE" id="PS50088">
    <property type="entry name" value="ANK_REPEAT"/>
    <property type="match status" value="1"/>
</dbReference>
<dbReference type="PROSITE" id="PS50330">
    <property type="entry name" value="UIM"/>
    <property type="match status" value="3"/>
</dbReference>
<feature type="chain" id="PRO_0000240651" description="Ankyrin repeat domain-containing protein 13D">
    <location>
        <begin position="1"/>
        <end position="605"/>
    </location>
</feature>
<feature type="repeat" description="ANK 1" evidence="1">
    <location>
        <begin position="39"/>
        <end position="68"/>
    </location>
</feature>
<feature type="repeat" description="ANK 2" evidence="1">
    <location>
        <begin position="72"/>
        <end position="101"/>
    </location>
</feature>
<feature type="domain" description="UIM 1" evidence="2">
    <location>
        <begin position="482"/>
        <end position="501"/>
    </location>
</feature>
<feature type="domain" description="UIM 2" evidence="2">
    <location>
        <begin position="528"/>
        <end position="547"/>
    </location>
</feature>
<feature type="domain" description="UIM 3" evidence="2">
    <location>
        <begin position="564"/>
        <end position="583"/>
    </location>
</feature>
<feature type="domain" description="UIM 4" evidence="2">
    <location>
        <begin position="589"/>
        <end position="605"/>
    </location>
</feature>
<feature type="region of interest" description="Disordered" evidence="3">
    <location>
        <begin position="306"/>
        <end position="333"/>
    </location>
</feature>
<feature type="region of interest" description="Disordered" evidence="3">
    <location>
        <begin position="541"/>
        <end position="605"/>
    </location>
</feature>
<feature type="compositionally biased region" description="Polar residues" evidence="3">
    <location>
        <begin position="319"/>
        <end position="328"/>
    </location>
</feature>
<feature type="compositionally biased region" description="Pro residues" evidence="3">
    <location>
        <begin position="550"/>
        <end position="563"/>
    </location>
</feature>
<feature type="compositionally biased region" description="Low complexity" evidence="3">
    <location>
        <begin position="564"/>
        <end position="575"/>
    </location>
</feature>
<feature type="compositionally biased region" description="Basic and acidic residues" evidence="3">
    <location>
        <begin position="576"/>
        <end position="589"/>
    </location>
</feature>
<feature type="modified residue" description="Phosphoserine" evidence="8 9 10">
    <location>
        <position position="552"/>
    </location>
</feature>
<feature type="modified residue" description="Phosphothreonine" evidence="8 9 10">
    <location>
        <position position="556"/>
    </location>
</feature>
<feature type="splice variant" id="VSP_061475" description="In isoform 2." evidence="6">
    <original>MAGPGPTFPLHRLVWANRHRELEAALHSHQHDIEQEDPRGRTPLELAVSLGNLESVRVLLRHNANVGKENRQGWAVLQEAVSTGDPEMVQLVLQYRDYQRATQRLAGIPELLNKLRQAPDFYVEMKWEFTSWVPLVSKMCPSDVYRVWKRGESLRVDTSLLGFEHMTWQRGRRSFIFKGQEAGALVMEVDHDRQVVHVETLGLTLQEPETLLAAMRPSEEHVASRLTSPIVSTHLDTRNVAFERNKCGIWGWRSEKMETVSGYEAKVYSATNVELVTRTRTEHLSDQDKSRSKAGKTPFQSFLGMAQQHSSHTGAPVQQAASPTNPTAISPEEYFDPNFSLESRNIGRPIEMSSKVQ</original>
    <variation>MSCGRLG</variation>
    <location>
        <begin position="1"/>
        <end position="357"/>
    </location>
</feature>
<feature type="splice variant" id="VSP_061476" description="In isoform 1." evidence="5 6">
    <location>
        <begin position="1"/>
        <end position="87"/>
    </location>
</feature>
<feature type="sequence conflict" description="In Ref. 1; BAC85932." evidence="7" ref="1">
    <original>M</original>
    <variation>V</variation>
    <location>
        <position position="166"/>
    </location>
</feature>
<feature type="sequence conflict" description="In Ref. 1; BAC86550." evidence="7" ref="1">
    <original>G</original>
    <variation>R</variation>
    <location>
        <position position="183"/>
    </location>
</feature>
<feature type="sequence conflict" description="In Ref. 1; BAC86550." evidence="7" ref="1">
    <original>P</original>
    <variation>S</variation>
    <location>
        <position position="452"/>
    </location>
</feature>
<feature type="sequence conflict" description="In Ref. 3; AAI10420." evidence="7" ref="3">
    <original>L</original>
    <variation>F</variation>
    <location>
        <position position="575"/>
    </location>
</feature>
<feature type="sequence conflict" description="In Ref. 1; BAC86550." evidence="7" ref="1">
    <original>D</original>
    <variation>Y</variation>
    <location>
        <position position="593"/>
    </location>
</feature>
<feature type="helix" evidence="11">
    <location>
        <begin position="588"/>
        <end position="601"/>
    </location>
</feature>
<reference key="1">
    <citation type="journal article" date="2004" name="Nat. Genet.">
        <title>Complete sequencing and characterization of 21,243 full-length human cDNAs.</title>
        <authorList>
            <person name="Ota T."/>
            <person name="Suzuki Y."/>
            <person name="Nishikawa T."/>
            <person name="Otsuki T."/>
            <person name="Sugiyama T."/>
            <person name="Irie R."/>
            <person name="Wakamatsu A."/>
            <person name="Hayashi K."/>
            <person name="Sato H."/>
            <person name="Nagai K."/>
            <person name="Kimura K."/>
            <person name="Makita H."/>
            <person name="Sekine M."/>
            <person name="Obayashi M."/>
            <person name="Nishi T."/>
            <person name="Shibahara T."/>
            <person name="Tanaka T."/>
            <person name="Ishii S."/>
            <person name="Yamamoto J."/>
            <person name="Saito K."/>
            <person name="Kawai Y."/>
            <person name="Isono Y."/>
            <person name="Nakamura Y."/>
            <person name="Nagahari K."/>
            <person name="Murakami K."/>
            <person name="Yasuda T."/>
            <person name="Iwayanagi T."/>
            <person name="Wagatsuma M."/>
            <person name="Shiratori A."/>
            <person name="Sudo H."/>
            <person name="Hosoiri T."/>
            <person name="Kaku Y."/>
            <person name="Kodaira H."/>
            <person name="Kondo H."/>
            <person name="Sugawara M."/>
            <person name="Takahashi M."/>
            <person name="Kanda K."/>
            <person name="Yokoi T."/>
            <person name="Furuya T."/>
            <person name="Kikkawa E."/>
            <person name="Omura Y."/>
            <person name="Abe K."/>
            <person name="Kamihara K."/>
            <person name="Katsuta N."/>
            <person name="Sato K."/>
            <person name="Tanikawa M."/>
            <person name="Yamazaki M."/>
            <person name="Ninomiya K."/>
            <person name="Ishibashi T."/>
            <person name="Yamashita H."/>
            <person name="Murakawa K."/>
            <person name="Fujimori K."/>
            <person name="Tanai H."/>
            <person name="Kimata M."/>
            <person name="Watanabe M."/>
            <person name="Hiraoka S."/>
            <person name="Chiba Y."/>
            <person name="Ishida S."/>
            <person name="Ono Y."/>
            <person name="Takiguchi S."/>
            <person name="Watanabe S."/>
            <person name="Yosida M."/>
            <person name="Hotuta T."/>
            <person name="Kusano J."/>
            <person name="Kanehori K."/>
            <person name="Takahashi-Fujii A."/>
            <person name="Hara H."/>
            <person name="Tanase T.-O."/>
            <person name="Nomura Y."/>
            <person name="Togiya S."/>
            <person name="Komai F."/>
            <person name="Hara R."/>
            <person name="Takeuchi K."/>
            <person name="Arita M."/>
            <person name="Imose N."/>
            <person name="Musashino K."/>
            <person name="Yuuki H."/>
            <person name="Oshima A."/>
            <person name="Sasaki N."/>
            <person name="Aotsuka S."/>
            <person name="Yoshikawa Y."/>
            <person name="Matsunawa H."/>
            <person name="Ichihara T."/>
            <person name="Shiohata N."/>
            <person name="Sano S."/>
            <person name="Moriya S."/>
            <person name="Momiyama H."/>
            <person name="Satoh N."/>
            <person name="Takami S."/>
            <person name="Terashima Y."/>
            <person name="Suzuki O."/>
            <person name="Nakagawa S."/>
            <person name="Senoh A."/>
            <person name="Mizoguchi H."/>
            <person name="Goto Y."/>
            <person name="Shimizu F."/>
            <person name="Wakebe H."/>
            <person name="Hishigaki H."/>
            <person name="Watanabe T."/>
            <person name="Sugiyama A."/>
            <person name="Takemoto M."/>
            <person name="Kawakami B."/>
            <person name="Yamazaki M."/>
            <person name="Watanabe K."/>
            <person name="Kumagai A."/>
            <person name="Itakura S."/>
            <person name="Fukuzumi Y."/>
            <person name="Fujimori Y."/>
            <person name="Komiyama M."/>
            <person name="Tashiro H."/>
            <person name="Tanigami A."/>
            <person name="Fujiwara T."/>
            <person name="Ono T."/>
            <person name="Yamada K."/>
            <person name="Fujii Y."/>
            <person name="Ozaki K."/>
            <person name="Hirao M."/>
            <person name="Ohmori Y."/>
            <person name="Kawabata A."/>
            <person name="Hikiji T."/>
            <person name="Kobatake N."/>
            <person name="Inagaki H."/>
            <person name="Ikema Y."/>
            <person name="Okamoto S."/>
            <person name="Okitani R."/>
            <person name="Kawakami T."/>
            <person name="Noguchi S."/>
            <person name="Itoh T."/>
            <person name="Shigeta K."/>
            <person name="Senba T."/>
            <person name="Matsumura K."/>
            <person name="Nakajima Y."/>
            <person name="Mizuno T."/>
            <person name="Morinaga M."/>
            <person name="Sasaki M."/>
            <person name="Togashi T."/>
            <person name="Oyama M."/>
            <person name="Hata H."/>
            <person name="Watanabe M."/>
            <person name="Komatsu T."/>
            <person name="Mizushima-Sugano J."/>
            <person name="Satoh T."/>
            <person name="Shirai Y."/>
            <person name="Takahashi Y."/>
            <person name="Nakagawa K."/>
            <person name="Okumura K."/>
            <person name="Nagase T."/>
            <person name="Nomura N."/>
            <person name="Kikuchi H."/>
            <person name="Masuho Y."/>
            <person name="Yamashita R."/>
            <person name="Nakai K."/>
            <person name="Yada T."/>
            <person name="Nakamura Y."/>
            <person name="Ohara O."/>
            <person name="Isogai T."/>
            <person name="Sugano S."/>
        </authorList>
    </citation>
    <scope>NUCLEOTIDE SEQUENCE [LARGE SCALE MRNA] (ISOFORM 1)</scope>
    <source>
        <tissue>Brain</tissue>
        <tissue>Uterus</tissue>
    </source>
</reference>
<reference key="2">
    <citation type="journal article" date="2006" name="Nature">
        <title>Human chromosome 11 DNA sequence and analysis including novel gene identification.</title>
        <authorList>
            <person name="Taylor T.D."/>
            <person name="Noguchi H."/>
            <person name="Totoki Y."/>
            <person name="Toyoda A."/>
            <person name="Kuroki Y."/>
            <person name="Dewar K."/>
            <person name="Lloyd C."/>
            <person name="Itoh T."/>
            <person name="Takeda T."/>
            <person name="Kim D.-W."/>
            <person name="She X."/>
            <person name="Barlow K.F."/>
            <person name="Bloom T."/>
            <person name="Bruford E."/>
            <person name="Chang J.L."/>
            <person name="Cuomo C.A."/>
            <person name="Eichler E."/>
            <person name="FitzGerald M.G."/>
            <person name="Jaffe D.B."/>
            <person name="LaButti K."/>
            <person name="Nicol R."/>
            <person name="Park H.-S."/>
            <person name="Seaman C."/>
            <person name="Sougnez C."/>
            <person name="Yang X."/>
            <person name="Zimmer A.R."/>
            <person name="Zody M.C."/>
            <person name="Birren B.W."/>
            <person name="Nusbaum C."/>
            <person name="Fujiyama A."/>
            <person name="Hattori M."/>
            <person name="Rogers J."/>
            <person name="Lander E.S."/>
            <person name="Sakaki Y."/>
        </authorList>
    </citation>
    <scope>NUCLEOTIDE SEQUENCE [LARGE SCALE GENOMIC DNA]</scope>
</reference>
<reference key="3">
    <citation type="journal article" date="2004" name="Genome Res.">
        <title>The status, quality, and expansion of the NIH full-length cDNA project: the Mammalian Gene Collection (MGC).</title>
        <authorList>
            <consortium name="The MGC Project Team"/>
        </authorList>
    </citation>
    <scope>NUCLEOTIDE SEQUENCE [LARGE SCALE MRNA] (ISOFORMS 1; 2 AND 3)</scope>
    <source>
        <tissue>Blood</tissue>
        <tissue>Lung</tissue>
    </source>
</reference>
<reference key="4">
    <citation type="journal article" date="2008" name="Proc. Natl. Acad. Sci. U.S.A.">
        <title>A quantitative atlas of mitotic phosphorylation.</title>
        <authorList>
            <person name="Dephoure N."/>
            <person name="Zhou C."/>
            <person name="Villen J."/>
            <person name="Beausoleil S.A."/>
            <person name="Bakalarski C.E."/>
            <person name="Elledge S.J."/>
            <person name="Gygi S.P."/>
        </authorList>
    </citation>
    <scope>PHOSPHORYLATION [LARGE SCALE ANALYSIS] AT SER-552 AND THR-556</scope>
    <scope>IDENTIFICATION BY MASS SPECTROMETRY [LARGE SCALE ANALYSIS]</scope>
    <source>
        <tissue>Cervix carcinoma</tissue>
    </source>
</reference>
<reference key="5">
    <citation type="journal article" date="2009" name="Sci. Signal.">
        <title>Quantitative phosphoproteomic analysis of T cell receptor signaling reveals system-wide modulation of protein-protein interactions.</title>
        <authorList>
            <person name="Mayya V."/>
            <person name="Lundgren D.H."/>
            <person name="Hwang S.-I."/>
            <person name="Rezaul K."/>
            <person name="Wu L."/>
            <person name="Eng J.K."/>
            <person name="Rodionov V."/>
            <person name="Han D.K."/>
        </authorList>
    </citation>
    <scope>PHOSPHORYLATION [LARGE SCALE ANALYSIS] AT SER-552 AND THR-556</scope>
    <scope>IDENTIFICATION BY MASS SPECTROMETRY [LARGE SCALE ANALYSIS]</scope>
    <source>
        <tissue>Leukemic T-cell</tissue>
    </source>
</reference>
<reference key="6">
    <citation type="journal article" date="2012" name="Mol. Biol. Cell">
        <title>The Ankrd 13 family of UIM-bearing proteins regulates EGF receptor endocytosis from the plasma membrane.</title>
        <authorList>
            <person name="Tanno H."/>
            <person name="Yamaguchi T."/>
            <person name="Goto E."/>
            <person name="Ishido S."/>
            <person name="Komada M."/>
        </authorList>
    </citation>
    <scope>FUNCTION</scope>
    <scope>INTERACTION WITH EGFR</scope>
    <scope>UBIQUITIN-BINDING</scope>
    <scope>SUBCELLULAR LOCATION</scope>
</reference>
<reference key="7">
    <citation type="journal article" date="2013" name="J. Proteome Res.">
        <title>Toward a comprehensive characterization of a human cancer cell phosphoproteome.</title>
        <authorList>
            <person name="Zhou H."/>
            <person name="Di Palma S."/>
            <person name="Preisinger C."/>
            <person name="Peng M."/>
            <person name="Polat A.N."/>
            <person name="Heck A.J."/>
            <person name="Mohammed S."/>
        </authorList>
    </citation>
    <scope>PHOSPHORYLATION [LARGE SCALE ANALYSIS] AT SER-552 AND THR-556</scope>
    <scope>IDENTIFICATION BY MASS SPECTROMETRY [LARGE SCALE ANALYSIS]</scope>
    <source>
        <tissue>Erythroleukemia</tissue>
    </source>
</reference>
<keyword id="KW-0002">3D-structure</keyword>
<keyword id="KW-0025">Alternative splicing</keyword>
<keyword id="KW-0040">ANK repeat</keyword>
<keyword id="KW-1003">Cell membrane</keyword>
<keyword id="KW-0967">Endosome</keyword>
<keyword id="KW-0472">Membrane</keyword>
<keyword id="KW-0597">Phosphoprotein</keyword>
<keyword id="KW-1267">Proteomics identification</keyword>
<keyword id="KW-1185">Reference proteome</keyword>
<keyword id="KW-0677">Repeat</keyword>
<organism>
    <name type="scientific">Homo sapiens</name>
    <name type="common">Human</name>
    <dbReference type="NCBI Taxonomy" id="9606"/>
    <lineage>
        <taxon>Eukaryota</taxon>
        <taxon>Metazoa</taxon>
        <taxon>Chordata</taxon>
        <taxon>Craniata</taxon>
        <taxon>Vertebrata</taxon>
        <taxon>Euteleostomi</taxon>
        <taxon>Mammalia</taxon>
        <taxon>Eutheria</taxon>
        <taxon>Euarchontoglires</taxon>
        <taxon>Primates</taxon>
        <taxon>Haplorrhini</taxon>
        <taxon>Catarrhini</taxon>
        <taxon>Hominidae</taxon>
        <taxon>Homo</taxon>
    </lineage>
</organism>
<gene>
    <name type="primary">ANKRD13D</name>
</gene>
<name>AN13D_HUMAN</name>
<protein>
    <recommendedName>
        <fullName>Ankyrin repeat domain-containing protein 13D</fullName>
    </recommendedName>
</protein>
<comment type="function">
    <text evidence="4">Ubiquitin-binding protein that specifically recognizes and binds 'Lys-63'-linked ubiquitin. Does not bind 'Lys-48'-linked ubiquitin. Positively regulates the internalization of ligand-activated EGFR by binding to the Ub moiety of ubiquitinated EGFR at the cell membrane.</text>
</comment>
<comment type="subunit">
    <text evidence="4">Interacts with EGFR (ubiquitinated); the interaction is direct and may regulate EGFR internalization.</text>
</comment>
<comment type="interaction">
    <interactant intactId="EBI-947028">
        <id>Q6ZTN6</id>
    </interactant>
    <interactant intactId="EBI-8636612">
        <id>Q15884</id>
        <label>ENTREP1</label>
    </interactant>
    <organismsDiffer>false</organismsDiffer>
    <experiments>3</experiments>
</comment>
<comment type="interaction">
    <interactant intactId="EBI-25840993">
        <id>Q6ZTN6-2</id>
    </interactant>
    <interactant intactId="EBI-25840379">
        <id>Q14203-5</id>
        <label>DCTN1</label>
    </interactant>
    <organismsDiffer>false</organismsDiffer>
    <experiments>3</experiments>
</comment>
<comment type="interaction">
    <interactant intactId="EBI-25840993">
        <id>Q6ZTN6-2</id>
    </interactant>
    <interactant intactId="EBI-12593112">
        <id>O75190-2</id>
        <label>DNAJB6</label>
    </interactant>
    <organismsDiffer>false</organismsDiffer>
    <experiments>3</experiments>
</comment>
<comment type="interaction">
    <interactant intactId="EBI-25840993">
        <id>Q6ZTN6-2</id>
    </interactant>
    <interactant intactId="EBI-352682">
        <id>P04792</id>
        <label>HSPB1</label>
    </interactant>
    <organismsDiffer>false</organismsDiffer>
    <experiments>3</experiments>
</comment>
<comment type="interaction">
    <interactant intactId="EBI-25840993">
        <id>Q6ZTN6-2</id>
    </interactant>
    <interactant intactId="EBI-517086">
        <id>O43464</id>
        <label>HTRA2</label>
    </interactant>
    <organismsDiffer>false</organismsDiffer>
    <experiments>3</experiments>
</comment>
<comment type="interaction">
    <interactant intactId="EBI-25840993">
        <id>Q6ZTN6-2</id>
    </interactant>
    <interactant intactId="EBI-466029">
        <id>P42858</id>
        <label>HTT</label>
    </interactant>
    <organismsDiffer>false</organismsDiffer>
    <experiments>9</experiments>
</comment>
<comment type="interaction">
    <interactant intactId="EBI-25840993">
        <id>Q6ZTN6-2</id>
    </interactant>
    <interactant intactId="EBI-1055254">
        <id>Q8WXH2</id>
        <label>JPH3</label>
    </interactant>
    <organismsDiffer>false</organismsDiffer>
    <experiments>3</experiments>
</comment>
<comment type="interaction">
    <interactant intactId="EBI-25840993">
        <id>Q6ZTN6-2</id>
    </interactant>
    <interactant intactId="EBI-10975473">
        <id>O60333-2</id>
        <label>KIF1B</label>
    </interactant>
    <organismsDiffer>false</organismsDiffer>
    <experiments>3</experiments>
</comment>
<comment type="interaction">
    <interactant intactId="EBI-25840993">
        <id>Q6ZTN6-2</id>
    </interactant>
    <interactant intactId="EBI-948266">
        <id>O14901</id>
        <label>KLF11</label>
    </interactant>
    <organismsDiffer>false</organismsDiffer>
    <experiments>3</experiments>
</comment>
<comment type="interaction">
    <interactant intactId="EBI-25840993">
        <id>Q6ZTN6-2</id>
    </interactant>
    <interactant intactId="EBI-21251460">
        <id>O60260-5</id>
        <label>PRKN</label>
    </interactant>
    <organismsDiffer>false</organismsDiffer>
    <experiments>3</experiments>
</comment>
<comment type="interaction">
    <interactant intactId="EBI-25840993">
        <id>Q6ZTN6-2</id>
    </interactant>
    <interactant intactId="EBI-396669">
        <id>Q9Y3C5</id>
        <label>RNF11</label>
    </interactant>
    <organismsDiffer>false</organismsDiffer>
    <experiments>3</experiments>
</comment>
<comment type="interaction">
    <interactant intactId="EBI-25840993">
        <id>Q6ZTN6-2</id>
    </interactant>
    <interactant intactId="EBI-985879">
        <id>P37840</id>
        <label>SNCA</label>
    </interactant>
    <organismsDiffer>false</organismsDiffer>
    <experiments>3</experiments>
</comment>
<comment type="interaction">
    <interactant intactId="EBI-25840993">
        <id>Q6ZTN6-2</id>
    </interactant>
    <interactant intactId="EBI-5235340">
        <id>Q7Z699</id>
        <label>SPRED1</label>
    </interactant>
    <organismsDiffer>false</organismsDiffer>
    <experiments>3</experiments>
</comment>
<comment type="interaction">
    <interactant intactId="EBI-25840993">
        <id>Q6ZTN6-2</id>
    </interactant>
    <interactant intactId="EBI-372899">
        <id>Q13148</id>
        <label>TARDBP</label>
    </interactant>
    <organismsDiffer>false</organismsDiffer>
    <experiments>3</experiments>
</comment>
<comment type="interaction">
    <interactant intactId="EBI-25840993">
        <id>Q6ZTN6-2</id>
    </interactant>
    <interactant intactId="EBI-720609">
        <id>O76024</id>
        <label>WFS1</label>
    </interactant>
    <organismsDiffer>false</organismsDiffer>
    <experiments>3</experiments>
</comment>
<comment type="interaction">
    <interactant intactId="EBI-13057940">
        <id>Q6ZTN6-3</id>
    </interactant>
    <interactant intactId="EBI-10261509">
        <id>Q8IV28</id>
        <label>NID2</label>
    </interactant>
    <organismsDiffer>false</organismsDiffer>
    <experiments>3</experiments>
</comment>
<comment type="subcellular location">
    <subcellularLocation>
        <location evidence="4">Cell membrane</location>
    </subcellularLocation>
    <subcellularLocation>
        <location evidence="4">Late endosome</location>
    </subcellularLocation>
    <text>Interaction with EGFR may enhance association with the cell membrane.</text>
</comment>
<comment type="alternative products">
    <event type="alternative splicing"/>
    <isoform>
        <id>Q6ZTN6-3</id>
        <name>3</name>
        <sequence type="displayed"/>
    </isoform>
    <isoform>
        <id>Q6ZTN6-1</id>
        <name>1</name>
        <sequence type="described" ref="VSP_061476"/>
    </isoform>
    <isoform>
        <id>Q6ZTN6-2</id>
        <name>2</name>
        <sequence type="described" ref="VSP_061475"/>
    </isoform>
</comment>
<accession>Q6ZTN6</accession>
<accession>D6RCN6</accession>
<accession>Q0VAK0</accession>
<accession>Q0VGC3</accession>
<accession>Q6ZVD0</accession>
<accession>Q86SU1</accession>
<proteinExistence type="evidence at protein level"/>